<evidence type="ECO:0000255" key="1">
    <source>
        <dbReference type="HAMAP-Rule" id="MF_01818"/>
    </source>
</evidence>
<keyword id="KW-0255">Endonuclease</keyword>
<keyword id="KW-0378">Hydrolase</keyword>
<keyword id="KW-0479">Metal-binding</keyword>
<keyword id="KW-0540">Nuclease</keyword>
<keyword id="KW-0819">tRNA processing</keyword>
<keyword id="KW-0862">Zinc</keyword>
<reference key="1">
    <citation type="submission" date="2008-02" db="EMBL/GenBank/DDBJ databases">
        <title>Complete sequence of Pseudomonas putida W619.</title>
        <authorList>
            <person name="Copeland A."/>
            <person name="Lucas S."/>
            <person name="Lapidus A."/>
            <person name="Barry K."/>
            <person name="Detter J.C."/>
            <person name="Glavina del Rio T."/>
            <person name="Dalin E."/>
            <person name="Tice H."/>
            <person name="Pitluck S."/>
            <person name="Chain P."/>
            <person name="Malfatti S."/>
            <person name="Shin M."/>
            <person name="Vergez L."/>
            <person name="Schmutz J."/>
            <person name="Larimer F."/>
            <person name="Land M."/>
            <person name="Hauser L."/>
            <person name="Kyrpides N."/>
            <person name="Kim E."/>
            <person name="Taghavi S."/>
            <person name="Vangronsveld D."/>
            <person name="van der Lelie D."/>
            <person name="Richardson P."/>
        </authorList>
    </citation>
    <scope>NUCLEOTIDE SEQUENCE [LARGE SCALE GENOMIC DNA]</scope>
    <source>
        <strain>W619</strain>
    </source>
</reference>
<accession>B1J6H3</accession>
<feature type="chain" id="PRO_1000187978" description="Ribonuclease Z">
    <location>
        <begin position="1"/>
        <end position="321"/>
    </location>
</feature>
<feature type="active site" description="Proton acceptor" evidence="1">
    <location>
        <position position="66"/>
    </location>
</feature>
<feature type="binding site" evidence="1">
    <location>
        <position position="62"/>
    </location>
    <ligand>
        <name>Zn(2+)</name>
        <dbReference type="ChEBI" id="CHEBI:29105"/>
        <label>1</label>
        <note>catalytic</note>
    </ligand>
</feature>
<feature type="binding site" evidence="1">
    <location>
        <position position="64"/>
    </location>
    <ligand>
        <name>Zn(2+)</name>
        <dbReference type="ChEBI" id="CHEBI:29105"/>
        <label>1</label>
        <note>catalytic</note>
    </ligand>
</feature>
<feature type="binding site" evidence="1">
    <location>
        <position position="66"/>
    </location>
    <ligand>
        <name>Zn(2+)</name>
        <dbReference type="ChEBI" id="CHEBI:29105"/>
        <label>2</label>
        <note>catalytic</note>
    </ligand>
</feature>
<feature type="binding site" evidence="1">
    <location>
        <position position="67"/>
    </location>
    <ligand>
        <name>Zn(2+)</name>
        <dbReference type="ChEBI" id="CHEBI:29105"/>
        <label>2</label>
        <note>catalytic</note>
    </ligand>
</feature>
<feature type="binding site" evidence="1">
    <location>
        <position position="139"/>
    </location>
    <ligand>
        <name>Zn(2+)</name>
        <dbReference type="ChEBI" id="CHEBI:29105"/>
        <label>1</label>
        <note>catalytic</note>
    </ligand>
</feature>
<feature type="binding site" evidence="1">
    <location>
        <position position="209"/>
    </location>
    <ligand>
        <name>Zn(2+)</name>
        <dbReference type="ChEBI" id="CHEBI:29105"/>
        <label>1</label>
        <note>catalytic</note>
    </ligand>
</feature>
<feature type="binding site" evidence="1">
    <location>
        <position position="209"/>
    </location>
    <ligand>
        <name>Zn(2+)</name>
        <dbReference type="ChEBI" id="CHEBI:29105"/>
        <label>2</label>
        <note>catalytic</note>
    </ligand>
</feature>
<feature type="binding site" evidence="1">
    <location>
        <position position="268"/>
    </location>
    <ligand>
        <name>Zn(2+)</name>
        <dbReference type="ChEBI" id="CHEBI:29105"/>
        <label>2</label>
        <note>catalytic</note>
    </ligand>
</feature>
<protein>
    <recommendedName>
        <fullName evidence="1">Ribonuclease Z</fullName>
        <shortName evidence="1">RNase Z</shortName>
        <ecNumber evidence="1">3.1.26.11</ecNumber>
    </recommendedName>
    <alternativeName>
        <fullName evidence="1">tRNA 3 endonuclease</fullName>
    </alternativeName>
    <alternativeName>
        <fullName evidence="1">tRNase Z</fullName>
    </alternativeName>
</protein>
<sequence>MDLLFLGTSAGVPTKARNVSATAVIEASGSHWYLVDCGEGTQHQLLHTPLSVRDLRAIFITHVHGDHCFGLPGLLASAGMSGRTAPLDLVLPAALHDWVRLSLAASDSFLPFELRLLAVEQLGEWRSDTLAVSTVQLSHRVPSVAFVFTELNPEPRLDVQRLDAEGIPRGPLWGELAKGLTVEHAGRMLHGRDYLRASRPARRVIVCGDNDNPELLAEAAKDVDVLVHEATFTQPIIARTGVSFGHSSAAAVARFAETAGVRNLVLTHFSARYQPDPRRSPCIDEVREEAQVHYSGNLTLAQDLQRYHIGRDGCLGRVTGI</sequence>
<organism>
    <name type="scientific">Pseudomonas putida (strain W619)</name>
    <dbReference type="NCBI Taxonomy" id="390235"/>
    <lineage>
        <taxon>Bacteria</taxon>
        <taxon>Pseudomonadati</taxon>
        <taxon>Pseudomonadota</taxon>
        <taxon>Gammaproteobacteria</taxon>
        <taxon>Pseudomonadales</taxon>
        <taxon>Pseudomonadaceae</taxon>
        <taxon>Pseudomonas</taxon>
    </lineage>
</organism>
<proteinExistence type="inferred from homology"/>
<comment type="function">
    <text evidence="1">Zinc phosphodiesterase, which displays some tRNA 3'-processing endonuclease activity. Probably involved in tRNA maturation, by removing a 3'-trailer from precursor tRNA.</text>
</comment>
<comment type="catalytic activity">
    <reaction evidence="1">
        <text>Endonucleolytic cleavage of RNA, removing extra 3' nucleotides from tRNA precursor, generating 3' termini of tRNAs. A 3'-hydroxy group is left at the tRNA terminus and a 5'-phosphoryl group is left at the trailer molecule.</text>
        <dbReference type="EC" id="3.1.26.11"/>
    </reaction>
</comment>
<comment type="cofactor">
    <cofactor evidence="1">
        <name>Zn(2+)</name>
        <dbReference type="ChEBI" id="CHEBI:29105"/>
    </cofactor>
    <text evidence="1">Binds 2 Zn(2+) ions.</text>
</comment>
<comment type="subunit">
    <text evidence="1">Homodimer.</text>
</comment>
<comment type="similarity">
    <text evidence="1">Belongs to the RNase Z family.</text>
</comment>
<gene>
    <name evidence="1" type="primary">rnz</name>
    <name type="ordered locus">PputW619_1839</name>
</gene>
<name>RNZ_PSEPW</name>
<dbReference type="EC" id="3.1.26.11" evidence="1"/>
<dbReference type="EMBL" id="CP000949">
    <property type="protein sequence ID" value="ACA72342.1"/>
    <property type="molecule type" value="Genomic_DNA"/>
</dbReference>
<dbReference type="SMR" id="B1J6H3"/>
<dbReference type="STRING" id="390235.PputW619_1839"/>
<dbReference type="KEGG" id="ppw:PputW619_1839"/>
<dbReference type="eggNOG" id="COG1234">
    <property type="taxonomic scope" value="Bacteria"/>
</dbReference>
<dbReference type="HOGENOM" id="CLU_031317_2_0_6"/>
<dbReference type="OrthoDB" id="9803916at2"/>
<dbReference type="GO" id="GO:0042781">
    <property type="term" value="F:3'-tRNA processing endoribonuclease activity"/>
    <property type="evidence" value="ECO:0007669"/>
    <property type="project" value="UniProtKB-UniRule"/>
</dbReference>
<dbReference type="GO" id="GO:0008270">
    <property type="term" value="F:zinc ion binding"/>
    <property type="evidence" value="ECO:0007669"/>
    <property type="project" value="UniProtKB-UniRule"/>
</dbReference>
<dbReference type="CDD" id="cd07717">
    <property type="entry name" value="RNaseZ_ZiPD-like_MBL-fold"/>
    <property type="match status" value="1"/>
</dbReference>
<dbReference type="Gene3D" id="3.60.15.10">
    <property type="entry name" value="Ribonuclease Z/Hydroxyacylglutathione hydrolase-like"/>
    <property type="match status" value="1"/>
</dbReference>
<dbReference type="HAMAP" id="MF_01818">
    <property type="entry name" value="RNase_Z_BN"/>
    <property type="match status" value="1"/>
</dbReference>
<dbReference type="InterPro" id="IPR001279">
    <property type="entry name" value="Metallo-B-lactamas"/>
</dbReference>
<dbReference type="InterPro" id="IPR036866">
    <property type="entry name" value="RibonucZ/Hydroxyglut_hydro"/>
</dbReference>
<dbReference type="InterPro" id="IPR013471">
    <property type="entry name" value="RNase_Z/BN"/>
</dbReference>
<dbReference type="PANTHER" id="PTHR46018">
    <property type="entry name" value="ZINC PHOSPHODIESTERASE ELAC PROTEIN 1"/>
    <property type="match status" value="1"/>
</dbReference>
<dbReference type="PANTHER" id="PTHR46018:SF2">
    <property type="entry name" value="ZINC PHOSPHODIESTERASE ELAC PROTEIN 1"/>
    <property type="match status" value="1"/>
</dbReference>
<dbReference type="Pfam" id="PF00753">
    <property type="entry name" value="Lactamase_B"/>
    <property type="match status" value="1"/>
</dbReference>
<dbReference type="SUPFAM" id="SSF56281">
    <property type="entry name" value="Metallo-hydrolase/oxidoreductase"/>
    <property type="match status" value="1"/>
</dbReference>